<evidence type="ECO:0000255" key="1">
    <source>
        <dbReference type="HAMAP-Rule" id="MF_00396"/>
    </source>
</evidence>
<evidence type="ECO:0007829" key="2">
    <source>
        <dbReference type="PDB" id="4OGQ"/>
    </source>
</evidence>
<name>PETM_NOSS1</name>
<dbReference type="EMBL" id="AJ319651">
    <property type="protein sequence ID" value="CAC39611.1"/>
    <property type="molecule type" value="Genomic_DNA"/>
</dbReference>
<dbReference type="EMBL" id="BA000019">
    <property type="protein sequence ID" value="BAB76453.1"/>
    <property type="molecule type" value="Genomic_DNA"/>
</dbReference>
<dbReference type="PIR" id="AB2400">
    <property type="entry name" value="AB2400"/>
</dbReference>
<dbReference type="RefSeq" id="WP_010998885.1">
    <property type="nucleotide sequence ID" value="NZ_RSCN01000020.1"/>
</dbReference>
<dbReference type="PDB" id="2ZT9">
    <property type="method" value="X-ray"/>
    <property type="resolution" value="3.00 A"/>
    <property type="chains" value="F=1-34"/>
</dbReference>
<dbReference type="PDB" id="4H44">
    <property type="method" value="X-ray"/>
    <property type="resolution" value="2.70 A"/>
    <property type="chains" value="F=1-34"/>
</dbReference>
<dbReference type="PDB" id="4OGQ">
    <property type="method" value="X-ray"/>
    <property type="resolution" value="2.50 A"/>
    <property type="chains" value="F=1-34"/>
</dbReference>
<dbReference type="PDBsum" id="2ZT9"/>
<dbReference type="PDBsum" id="4H44"/>
<dbReference type="PDBsum" id="4OGQ"/>
<dbReference type="SMR" id="P0A3Y1"/>
<dbReference type="DIP" id="DIP-61005N"/>
<dbReference type="IntAct" id="P0A3Y1">
    <property type="interactions" value="1"/>
</dbReference>
<dbReference type="STRING" id="103690.gene:10496807"/>
<dbReference type="TCDB" id="3.D.3.5.6">
    <property type="family name" value="the proton-translocating quinol:cytochrome c reductase (qcr) superfamily"/>
</dbReference>
<dbReference type="KEGG" id="ana:asl4754"/>
<dbReference type="eggNOG" id="ENOG5031VXR">
    <property type="taxonomic scope" value="Bacteria"/>
</dbReference>
<dbReference type="OrthoDB" id="468305at2"/>
<dbReference type="EvolutionaryTrace" id="P0A3Y1"/>
<dbReference type="Proteomes" id="UP000002483">
    <property type="component" value="Chromosome"/>
</dbReference>
<dbReference type="GO" id="GO:0009512">
    <property type="term" value="C:cytochrome b6f complex"/>
    <property type="evidence" value="ECO:0007669"/>
    <property type="project" value="InterPro"/>
</dbReference>
<dbReference type="GO" id="GO:0031676">
    <property type="term" value="C:plasma membrane-derived thylakoid membrane"/>
    <property type="evidence" value="ECO:0007669"/>
    <property type="project" value="UniProtKB-SubCell"/>
</dbReference>
<dbReference type="GO" id="GO:0009055">
    <property type="term" value="F:electron transfer activity"/>
    <property type="evidence" value="ECO:0007669"/>
    <property type="project" value="UniProtKB-UniRule"/>
</dbReference>
<dbReference type="GO" id="GO:0015979">
    <property type="term" value="P:photosynthesis"/>
    <property type="evidence" value="ECO:0007669"/>
    <property type="project" value="UniProtKB-KW"/>
</dbReference>
<dbReference type="HAMAP" id="MF_00396">
    <property type="entry name" value="Cytb6_f_PetM"/>
    <property type="match status" value="1"/>
</dbReference>
<dbReference type="InterPro" id="IPR012595">
    <property type="entry name" value="PetM_cyt_b6/f_cplx_su7"/>
</dbReference>
<dbReference type="Pfam" id="PF08041">
    <property type="entry name" value="PetM"/>
    <property type="match status" value="1"/>
</dbReference>
<dbReference type="SUPFAM" id="SSF103441">
    <property type="entry name" value="PetM subunit of the cytochrome b6f complex"/>
    <property type="match status" value="1"/>
</dbReference>
<keyword id="KW-0002">3D-structure</keyword>
<keyword id="KW-0249">Electron transport</keyword>
<keyword id="KW-0472">Membrane</keyword>
<keyword id="KW-0602">Photosynthesis</keyword>
<keyword id="KW-1185">Reference proteome</keyword>
<keyword id="KW-0793">Thylakoid</keyword>
<keyword id="KW-0812">Transmembrane</keyword>
<keyword id="KW-1133">Transmembrane helix</keyword>
<keyword id="KW-0813">Transport</keyword>
<gene>
    <name evidence="1" type="primary">petM</name>
    <name type="ordered locus">asl4754</name>
</gene>
<reference key="1">
    <citation type="submission" date="2001-05" db="EMBL/GenBank/DDBJ databases">
        <title>b6f complex of Anabaena sp.</title>
        <authorList>
            <person name="Arnold M."/>
        </authorList>
    </citation>
    <scope>NUCLEOTIDE SEQUENCE [GENOMIC DNA]</scope>
</reference>
<reference key="2">
    <citation type="journal article" date="2001" name="DNA Res.">
        <title>Complete genomic sequence of the filamentous nitrogen-fixing cyanobacterium Anabaena sp. strain PCC 7120.</title>
        <authorList>
            <person name="Kaneko T."/>
            <person name="Nakamura Y."/>
            <person name="Wolk C.P."/>
            <person name="Kuritz T."/>
            <person name="Sasamoto S."/>
            <person name="Watanabe A."/>
            <person name="Iriguchi M."/>
            <person name="Ishikawa A."/>
            <person name="Kawashima K."/>
            <person name="Kimura T."/>
            <person name="Kishida Y."/>
            <person name="Kohara M."/>
            <person name="Matsumoto M."/>
            <person name="Matsuno A."/>
            <person name="Muraki A."/>
            <person name="Nakazaki N."/>
            <person name="Shimpo S."/>
            <person name="Sugimoto M."/>
            <person name="Takazawa M."/>
            <person name="Yamada M."/>
            <person name="Yasuda M."/>
            <person name="Tabata S."/>
        </authorList>
    </citation>
    <scope>NUCLEOTIDE SEQUENCE [LARGE SCALE GENOMIC DNA]</scope>
    <source>
        <strain>PCC 7120 / SAG 25.82 / UTEX 2576</strain>
    </source>
</reference>
<accession>P0A3Y1</accession>
<accession>Q9F4W2</accession>
<proteinExistence type="evidence at protein level"/>
<protein>
    <recommendedName>
        <fullName evidence="1">Cytochrome b6-f complex subunit 7</fullName>
    </recommendedName>
    <alternativeName>
        <fullName evidence="1">Cytochrome b6-f complex subunit PetM</fullName>
    </alternativeName>
    <alternativeName>
        <fullName evidence="1">Cytochrome b6-f complex subunit VII</fullName>
    </alternativeName>
</protein>
<organism>
    <name type="scientific">Nostoc sp. (strain PCC 7120 / SAG 25.82 / UTEX 2576)</name>
    <dbReference type="NCBI Taxonomy" id="103690"/>
    <lineage>
        <taxon>Bacteria</taxon>
        <taxon>Bacillati</taxon>
        <taxon>Cyanobacteriota</taxon>
        <taxon>Cyanophyceae</taxon>
        <taxon>Nostocales</taxon>
        <taxon>Nostocaceae</taxon>
        <taxon>Nostoc</taxon>
    </lineage>
</organism>
<sequence length="34" mass="3546">MSGELLNAALLSFGLIFVGWALGALLLKIQGAEE</sequence>
<comment type="function">
    <text evidence="1">Component of the cytochrome b6-f complex, which mediates electron transfer between photosystem II (PSII) and photosystem I (PSI), cyclic electron flow around PSI, and state transitions.</text>
</comment>
<comment type="subunit">
    <text evidence="1">The 4 large subunits of the cytochrome b6-f complex are cytochrome b6, subunit IV (17 kDa polypeptide, PetD), cytochrome f and the Rieske protein, while the 4 small subunits are PetG, PetL, PetM and PetN. The complex functions as a dimer.</text>
</comment>
<comment type="subcellular location">
    <subcellularLocation>
        <location evidence="1">Cellular thylakoid membrane</location>
        <topology evidence="1">Single-pass membrane protein</topology>
    </subcellularLocation>
</comment>
<comment type="similarity">
    <text evidence="1">Belongs to the PetM family.</text>
</comment>
<feature type="chain" id="PRO_0000218014" description="Cytochrome b6-f complex subunit 7">
    <location>
        <begin position="1"/>
        <end position="34"/>
    </location>
</feature>
<feature type="transmembrane region" description="Helical" evidence="1">
    <location>
        <begin position="9"/>
        <end position="29"/>
    </location>
</feature>
<feature type="helix" evidence="2">
    <location>
        <begin position="3"/>
        <end position="30"/>
    </location>
</feature>